<dbReference type="EMBL" id="AK014985">
    <property type="protein sequence ID" value="BAB29655.1"/>
    <property type="molecule type" value="mRNA"/>
</dbReference>
<dbReference type="EMBL" id="AL662887">
    <property type="status" value="NOT_ANNOTATED_CDS"/>
    <property type="molecule type" value="Genomic_DNA"/>
</dbReference>
<dbReference type="CCDS" id="CCDS25767.1"/>
<dbReference type="RefSeq" id="NP_081898.1">
    <property type="nucleotide sequence ID" value="NM_027622.3"/>
</dbReference>
<dbReference type="FunCoup" id="Q9D5S1">
    <property type="interactions" value="116"/>
</dbReference>
<dbReference type="STRING" id="10090.ENSMUSP00000037027"/>
<dbReference type="PaxDb" id="10090-ENSMUSP00000037027"/>
<dbReference type="ProteomicsDB" id="298069"/>
<dbReference type="DNASU" id="70956"/>
<dbReference type="Ensembl" id="ENSMUST00000039146.4">
    <property type="protein sequence ID" value="ENSMUSP00000037027.4"/>
    <property type="gene ID" value="ENSMUSG00000039337.4"/>
</dbReference>
<dbReference type="GeneID" id="70956"/>
<dbReference type="KEGG" id="mmu:70956"/>
<dbReference type="UCSC" id="uc007mvh.2">
    <property type="organism name" value="mouse"/>
</dbReference>
<dbReference type="AGR" id="MGI:1918206"/>
<dbReference type="CTD" id="70956"/>
<dbReference type="MGI" id="MGI:1918206">
    <property type="gene designation" value="Tex19.2"/>
</dbReference>
<dbReference type="VEuPathDB" id="HostDB:ENSMUSG00000039337"/>
<dbReference type="eggNOG" id="ENOG502T8GZ">
    <property type="taxonomic scope" value="Eukaryota"/>
</dbReference>
<dbReference type="GeneTree" id="ENSGT00390000014279"/>
<dbReference type="HOGENOM" id="CLU_855143_0_0_1"/>
<dbReference type="InParanoid" id="Q9D5S1"/>
<dbReference type="OMA" id="QQDLHRW"/>
<dbReference type="OrthoDB" id="9797797at2759"/>
<dbReference type="PhylomeDB" id="Q9D5S1"/>
<dbReference type="TreeFam" id="TF338441"/>
<dbReference type="BioGRID-ORCS" id="70956">
    <property type="hits" value="3 hits in 78 CRISPR screens"/>
</dbReference>
<dbReference type="PRO" id="PR:Q9D5S1"/>
<dbReference type="Proteomes" id="UP000000589">
    <property type="component" value="Chromosome 11"/>
</dbReference>
<dbReference type="RNAct" id="Q9D5S1">
    <property type="molecule type" value="protein"/>
</dbReference>
<dbReference type="Bgee" id="ENSMUSG00000039337">
    <property type="expression patterns" value="Expressed in spermatocyte and 35 other cell types or tissues"/>
</dbReference>
<dbReference type="ExpressionAtlas" id="Q9D5S1">
    <property type="expression patterns" value="baseline and differential"/>
</dbReference>
<dbReference type="GO" id="GO:0005737">
    <property type="term" value="C:cytoplasm"/>
    <property type="evidence" value="ECO:0007669"/>
    <property type="project" value="UniProtKB-SubCell"/>
</dbReference>
<dbReference type="GO" id="GO:0005634">
    <property type="term" value="C:nucleus"/>
    <property type="evidence" value="ECO:0000314"/>
    <property type="project" value="MGI"/>
</dbReference>
<dbReference type="GO" id="GO:0034584">
    <property type="term" value="F:piRNA binding"/>
    <property type="evidence" value="ECO:0000314"/>
    <property type="project" value="UniProtKB"/>
</dbReference>
<dbReference type="GO" id="GO:0030154">
    <property type="term" value="P:cell differentiation"/>
    <property type="evidence" value="ECO:0007669"/>
    <property type="project" value="UniProtKB-KW"/>
</dbReference>
<dbReference type="GO" id="GO:0007140">
    <property type="term" value="P:male meiotic nuclear division"/>
    <property type="evidence" value="ECO:0000315"/>
    <property type="project" value="UniProtKB"/>
</dbReference>
<dbReference type="GO" id="GO:0007283">
    <property type="term" value="P:spermatogenesis"/>
    <property type="evidence" value="ECO:0000315"/>
    <property type="project" value="UniProtKB"/>
</dbReference>
<dbReference type="InterPro" id="IPR029093">
    <property type="entry name" value="TEX19"/>
</dbReference>
<dbReference type="PANTHER" id="PTHR31387">
    <property type="entry name" value="TESTIS-EXPRESSED PROTEIN 19"/>
    <property type="match status" value="1"/>
</dbReference>
<dbReference type="PANTHER" id="PTHR31387:SF2">
    <property type="entry name" value="TESTIS-EXPRESSED PROTEIN 19.2"/>
    <property type="match status" value="1"/>
</dbReference>
<dbReference type="Pfam" id="PF15553">
    <property type="entry name" value="TEX19"/>
    <property type="match status" value="1"/>
</dbReference>
<proteinExistence type="evidence at protein level"/>
<protein>
    <recommendedName>
        <fullName>Testis-expressed protein 19.2</fullName>
    </recommendedName>
    <alternativeName>
        <fullName>Testis-expressed protein 19B</fullName>
    </alternativeName>
</protein>
<sequence length="317" mass="35235">MCPPVSVRHGAKGMSCLYGAWLYHLVHGEQMKICFACFKAAFLVVKNMLEMGDWEEGVWDAEPMELSEASSEPEEWPGLSGGEGQGHLPHGISVSAGSGAQGPQPVPTELGPQEAVPLDLGPEDAEWTQALPWRFDGLSPCSHWLIPPLSWWEIFNVSPSPGQPVLLELSPTWPMDPLEAEAWLVGLKFVFLLGGFDAICYMLSMTPCWAVRTRVQRWQVLLDPGDVRVAQLQNAPEQQDLHRWKLSVLESSELGMELVPADCSLQKGGFKVHSYLPWHNSTPESWSREPGERLLVVEVVSLRELPCFRSPSPDPHN</sequence>
<evidence type="ECO:0000250" key="1">
    <source>
        <dbReference type="UniProtKB" id="Q99MV2"/>
    </source>
</evidence>
<evidence type="ECO:0000256" key="2">
    <source>
        <dbReference type="SAM" id="MobiDB-lite"/>
    </source>
</evidence>
<evidence type="ECO:0000269" key="3">
    <source>
    </source>
</evidence>
<evidence type="ECO:0000269" key="4">
    <source>
    </source>
</evidence>
<evidence type="ECO:0000269" key="5">
    <source>
    </source>
</evidence>
<evidence type="ECO:0000269" key="6">
    <source>
    </source>
</evidence>
<evidence type="ECO:0000305" key="7">
    <source>
    </source>
</evidence>
<keyword id="KW-0963">Cytoplasm</keyword>
<keyword id="KW-0221">Differentiation</keyword>
<keyword id="KW-0469">Meiosis</keyword>
<keyword id="KW-1185">Reference proteome</keyword>
<keyword id="KW-0694">RNA-binding</keyword>
<keyword id="KW-0744">Spermatogenesis</keyword>
<comment type="function">
    <text evidence="6 7">May be required during spermatogenesis, probably by participating in the repression of retrotransposable elements and prevent their mobilization (Probable). With its paralog, Tex19.1, collaborates with the Piwi-interacting RNA (piRNA) pathway, which mediates the repression of transposable elements during meiosis by forming complexes composed of piRNAs and Piwi proteins. Interacts with Piwi proteins and directly binds piRNAs, a class of 24 to 30 nucleotide RNAs that are generated by a Dicer-independent mechanism and are primarily derived from transposons and other repeated sequence elements (PubMed:28254886).</text>
</comment>
<comment type="subunit">
    <text evidence="4 7">Interacts with UBR2 (PubMed:21103378). Interacts with piRNA-associated proteins DDX4, EDC4, MAEL, PIWIL1, PIWIL2, RANBP9 and TDRD6 (Probable).</text>
</comment>
<comment type="subcellular location">
    <subcellularLocation>
        <location evidence="1">Cytoplasm</location>
    </subcellularLocation>
    <text evidence="3">Was initially reported to localize in the nucleus.</text>
</comment>
<comment type="tissue specificity">
    <text evidence="3 6">Specifically expressed in somatic cells of male gonad lineage.</text>
</comment>
<comment type="developmental stage">
    <text evidence="5">Expressed in the ectoderm and then in primordial germ cells (PGCs). Expressed in testis from embryos (13.5 dpc) to adulthood in gonocytes and spermatocytes.</text>
</comment>
<comment type="disruption phenotype">
    <text evidence="6">Males deficient for both for Tex19.1 and Tex19.2 have impaired spermatogenesis, small testes and are infertile. They show vacuolization and seminiferous epithelium degeneration as early as P16. They have defects in meiotic chromosome synapsis, persistence of DNA double-strand breaks during meiosis, lack of post-meiotic germ cell and up-regulation of MMERVK10C retrotransposon expression. Number of females double knockout for Tex19.1 and Tex19.2 surviving 2 weeks or more is reduced compared to males. Females display normal fertility. Surviving mutants do not present gross somatic abnormalities.</text>
</comment>
<gene>
    <name type="primary">Tex19.2</name>
    <name type="synonym">Tex19b</name>
</gene>
<name>TX19B_MOUSE</name>
<reference key="1">
    <citation type="journal article" date="2005" name="Science">
        <title>The transcriptional landscape of the mammalian genome.</title>
        <authorList>
            <person name="Carninci P."/>
            <person name="Kasukawa T."/>
            <person name="Katayama S."/>
            <person name="Gough J."/>
            <person name="Frith M.C."/>
            <person name="Maeda N."/>
            <person name="Oyama R."/>
            <person name="Ravasi T."/>
            <person name="Lenhard B."/>
            <person name="Wells C."/>
            <person name="Kodzius R."/>
            <person name="Shimokawa K."/>
            <person name="Bajic V.B."/>
            <person name="Brenner S.E."/>
            <person name="Batalov S."/>
            <person name="Forrest A.R."/>
            <person name="Zavolan M."/>
            <person name="Davis M.J."/>
            <person name="Wilming L.G."/>
            <person name="Aidinis V."/>
            <person name="Allen J.E."/>
            <person name="Ambesi-Impiombato A."/>
            <person name="Apweiler R."/>
            <person name="Aturaliya R.N."/>
            <person name="Bailey T.L."/>
            <person name="Bansal M."/>
            <person name="Baxter L."/>
            <person name="Beisel K.W."/>
            <person name="Bersano T."/>
            <person name="Bono H."/>
            <person name="Chalk A.M."/>
            <person name="Chiu K.P."/>
            <person name="Choudhary V."/>
            <person name="Christoffels A."/>
            <person name="Clutterbuck D.R."/>
            <person name="Crowe M.L."/>
            <person name="Dalla E."/>
            <person name="Dalrymple B.P."/>
            <person name="de Bono B."/>
            <person name="Della Gatta G."/>
            <person name="di Bernardo D."/>
            <person name="Down T."/>
            <person name="Engstrom P."/>
            <person name="Fagiolini M."/>
            <person name="Faulkner G."/>
            <person name="Fletcher C.F."/>
            <person name="Fukushima T."/>
            <person name="Furuno M."/>
            <person name="Futaki S."/>
            <person name="Gariboldi M."/>
            <person name="Georgii-Hemming P."/>
            <person name="Gingeras T.R."/>
            <person name="Gojobori T."/>
            <person name="Green R.E."/>
            <person name="Gustincich S."/>
            <person name="Harbers M."/>
            <person name="Hayashi Y."/>
            <person name="Hensch T.K."/>
            <person name="Hirokawa N."/>
            <person name="Hill D."/>
            <person name="Huminiecki L."/>
            <person name="Iacono M."/>
            <person name="Ikeo K."/>
            <person name="Iwama A."/>
            <person name="Ishikawa T."/>
            <person name="Jakt M."/>
            <person name="Kanapin A."/>
            <person name="Katoh M."/>
            <person name="Kawasawa Y."/>
            <person name="Kelso J."/>
            <person name="Kitamura H."/>
            <person name="Kitano H."/>
            <person name="Kollias G."/>
            <person name="Krishnan S.P."/>
            <person name="Kruger A."/>
            <person name="Kummerfeld S.K."/>
            <person name="Kurochkin I.V."/>
            <person name="Lareau L.F."/>
            <person name="Lazarevic D."/>
            <person name="Lipovich L."/>
            <person name="Liu J."/>
            <person name="Liuni S."/>
            <person name="McWilliam S."/>
            <person name="Madan Babu M."/>
            <person name="Madera M."/>
            <person name="Marchionni L."/>
            <person name="Matsuda H."/>
            <person name="Matsuzawa S."/>
            <person name="Miki H."/>
            <person name="Mignone F."/>
            <person name="Miyake S."/>
            <person name="Morris K."/>
            <person name="Mottagui-Tabar S."/>
            <person name="Mulder N."/>
            <person name="Nakano N."/>
            <person name="Nakauchi H."/>
            <person name="Ng P."/>
            <person name="Nilsson R."/>
            <person name="Nishiguchi S."/>
            <person name="Nishikawa S."/>
            <person name="Nori F."/>
            <person name="Ohara O."/>
            <person name="Okazaki Y."/>
            <person name="Orlando V."/>
            <person name="Pang K.C."/>
            <person name="Pavan W.J."/>
            <person name="Pavesi G."/>
            <person name="Pesole G."/>
            <person name="Petrovsky N."/>
            <person name="Piazza S."/>
            <person name="Reed J."/>
            <person name="Reid J.F."/>
            <person name="Ring B.Z."/>
            <person name="Ringwald M."/>
            <person name="Rost B."/>
            <person name="Ruan Y."/>
            <person name="Salzberg S.L."/>
            <person name="Sandelin A."/>
            <person name="Schneider C."/>
            <person name="Schoenbach C."/>
            <person name="Sekiguchi K."/>
            <person name="Semple C.A."/>
            <person name="Seno S."/>
            <person name="Sessa L."/>
            <person name="Sheng Y."/>
            <person name="Shibata Y."/>
            <person name="Shimada H."/>
            <person name="Shimada K."/>
            <person name="Silva D."/>
            <person name="Sinclair B."/>
            <person name="Sperling S."/>
            <person name="Stupka E."/>
            <person name="Sugiura K."/>
            <person name="Sultana R."/>
            <person name="Takenaka Y."/>
            <person name="Taki K."/>
            <person name="Tammoja K."/>
            <person name="Tan S.L."/>
            <person name="Tang S."/>
            <person name="Taylor M.S."/>
            <person name="Tegner J."/>
            <person name="Teichmann S.A."/>
            <person name="Ueda H.R."/>
            <person name="van Nimwegen E."/>
            <person name="Verardo R."/>
            <person name="Wei C.L."/>
            <person name="Yagi K."/>
            <person name="Yamanishi H."/>
            <person name="Zabarovsky E."/>
            <person name="Zhu S."/>
            <person name="Zimmer A."/>
            <person name="Hide W."/>
            <person name="Bult C."/>
            <person name="Grimmond S.M."/>
            <person name="Teasdale R.D."/>
            <person name="Liu E.T."/>
            <person name="Brusic V."/>
            <person name="Quackenbush J."/>
            <person name="Wahlestedt C."/>
            <person name="Mattick J.S."/>
            <person name="Hume D.A."/>
            <person name="Kai C."/>
            <person name="Sasaki D."/>
            <person name="Tomaru Y."/>
            <person name="Fukuda S."/>
            <person name="Kanamori-Katayama M."/>
            <person name="Suzuki M."/>
            <person name="Aoki J."/>
            <person name="Arakawa T."/>
            <person name="Iida J."/>
            <person name="Imamura K."/>
            <person name="Itoh M."/>
            <person name="Kato T."/>
            <person name="Kawaji H."/>
            <person name="Kawagashira N."/>
            <person name="Kawashima T."/>
            <person name="Kojima M."/>
            <person name="Kondo S."/>
            <person name="Konno H."/>
            <person name="Nakano K."/>
            <person name="Ninomiya N."/>
            <person name="Nishio T."/>
            <person name="Okada M."/>
            <person name="Plessy C."/>
            <person name="Shibata K."/>
            <person name="Shiraki T."/>
            <person name="Suzuki S."/>
            <person name="Tagami M."/>
            <person name="Waki K."/>
            <person name="Watahiki A."/>
            <person name="Okamura-Oho Y."/>
            <person name="Suzuki H."/>
            <person name="Kawai J."/>
            <person name="Hayashizaki Y."/>
        </authorList>
    </citation>
    <scope>NUCLEOTIDE SEQUENCE [LARGE SCALE MRNA]</scope>
    <source>
        <strain>C57BL/6J</strain>
        <tissue>Testis</tissue>
    </source>
</reference>
<reference key="2">
    <citation type="journal article" date="2009" name="PLoS Biol.">
        <title>Lineage-specific biology revealed by a finished genome assembly of the mouse.</title>
        <authorList>
            <person name="Church D.M."/>
            <person name="Goodstadt L."/>
            <person name="Hillier L.W."/>
            <person name="Zody M.C."/>
            <person name="Goldstein S."/>
            <person name="She X."/>
            <person name="Bult C.J."/>
            <person name="Agarwala R."/>
            <person name="Cherry J.L."/>
            <person name="DiCuccio M."/>
            <person name="Hlavina W."/>
            <person name="Kapustin Y."/>
            <person name="Meric P."/>
            <person name="Maglott D."/>
            <person name="Birtle Z."/>
            <person name="Marques A.C."/>
            <person name="Graves T."/>
            <person name="Zhou S."/>
            <person name="Teague B."/>
            <person name="Potamousis K."/>
            <person name="Churas C."/>
            <person name="Place M."/>
            <person name="Herschleb J."/>
            <person name="Runnheim R."/>
            <person name="Forrest D."/>
            <person name="Amos-Landgraf J."/>
            <person name="Schwartz D.C."/>
            <person name="Cheng Z."/>
            <person name="Lindblad-Toh K."/>
            <person name="Eichler E.E."/>
            <person name="Ponting C.P."/>
        </authorList>
    </citation>
    <scope>NUCLEOTIDE SEQUENCE [LARGE SCALE GENOMIC DNA]</scope>
    <source>
        <strain>C57BL/6J</strain>
    </source>
</reference>
<reference key="3">
    <citation type="journal article" date="2008" name="Stem Cells">
        <title>Tex19, a mammalian-specific protein with a restricted expression in pluripotent stem cells and germ line.</title>
        <authorList>
            <person name="Kuntz S."/>
            <person name="Kieffer E."/>
            <person name="Bianchetti L."/>
            <person name="Lamoureux N."/>
            <person name="Fuhrmann G."/>
            <person name="Viville S."/>
        </authorList>
    </citation>
    <scope>TISSUE SPECIFICITY</scope>
</reference>
<reference key="4">
    <citation type="journal article" date="2010" name="Cell">
        <title>A tissue-specific atlas of mouse protein phosphorylation and expression.</title>
        <authorList>
            <person name="Huttlin E.L."/>
            <person name="Jedrychowski M.P."/>
            <person name="Elias J.E."/>
            <person name="Goswami T."/>
            <person name="Rad R."/>
            <person name="Beausoleil S.A."/>
            <person name="Villen J."/>
            <person name="Haas W."/>
            <person name="Sowa M.E."/>
            <person name="Gygi S.P."/>
        </authorList>
    </citation>
    <scope>IDENTIFICATION BY MASS SPECTROMETRY [LARGE SCALE ANALYSIS]</scope>
    <source>
        <tissue>Testis</tissue>
    </source>
</reference>
<reference key="5">
    <citation type="journal article" date="2010" name="PLoS ONE">
        <title>The ubiquitin ligase Ubr2, a recognition E3 component of the N-end rule pathway, stabilizes Tex19.1 during spermatogenesis.</title>
        <authorList>
            <person name="Yang F."/>
            <person name="Cheng Y."/>
            <person name="An J.Y."/>
            <person name="Kwon Y.T."/>
            <person name="Eckardt S."/>
            <person name="Leu N.A."/>
            <person name="McLaughlin K.J."/>
            <person name="Wang P.J."/>
        </authorList>
    </citation>
    <scope>INTERACTION WITH UBR2</scope>
</reference>
<reference key="6">
    <citation type="journal article" date="2012" name="J. Reprod. Dev.">
        <title>Tex 19 paralogs exhibit a gonad and placenta-specific expression in the mouse.</title>
        <authorList>
            <person name="Celebi C."/>
            <person name="van Montfoort A."/>
            <person name="Skory V."/>
            <person name="Kieffer E."/>
            <person name="Kuntz S."/>
            <person name="Mark M."/>
            <person name="Viville S."/>
        </authorList>
    </citation>
    <scope>DEVELOPMENTAL STAGE</scope>
</reference>
<reference key="7">
    <citation type="journal article" date="2017" name="J. Cell Sci.">
        <title>Tex19 paralogs are new members of the piRNA pathway controlling retrotransposon suppression.</title>
        <authorList>
            <person name="Tarabay Y."/>
            <person name="Achour M."/>
            <person name="Teletin M."/>
            <person name="Ye T."/>
            <person name="Teissandier A."/>
            <person name="Mark M."/>
            <person name="Bourc'his D."/>
            <person name="Viville S."/>
        </authorList>
    </citation>
    <scope>FUNCTION</scope>
    <scope>DISRUPTION PHENOTYPE</scope>
    <scope>TISSUE SPECIFICITY</scope>
    <scope>RNA-BINDING</scope>
    <scope>INTERACTION WITH DDX4; EDC4; MAEL; PIWIL1; PIWIL2; RANBP9 AND TDRD6</scope>
</reference>
<accession>Q9D5S1</accession>
<organism>
    <name type="scientific">Mus musculus</name>
    <name type="common">Mouse</name>
    <dbReference type="NCBI Taxonomy" id="10090"/>
    <lineage>
        <taxon>Eukaryota</taxon>
        <taxon>Metazoa</taxon>
        <taxon>Chordata</taxon>
        <taxon>Craniata</taxon>
        <taxon>Vertebrata</taxon>
        <taxon>Euteleostomi</taxon>
        <taxon>Mammalia</taxon>
        <taxon>Eutheria</taxon>
        <taxon>Euarchontoglires</taxon>
        <taxon>Glires</taxon>
        <taxon>Rodentia</taxon>
        <taxon>Myomorpha</taxon>
        <taxon>Muroidea</taxon>
        <taxon>Muridae</taxon>
        <taxon>Murinae</taxon>
        <taxon>Mus</taxon>
        <taxon>Mus</taxon>
    </lineage>
</organism>
<feature type="chain" id="PRO_0000325964" description="Testis-expressed protein 19.2">
    <location>
        <begin position="1"/>
        <end position="317"/>
    </location>
</feature>
<feature type="region of interest" description="Disordered" evidence="2">
    <location>
        <begin position="64"/>
        <end position="113"/>
    </location>
</feature>
<feature type="region of interest" description="Important for interaction with piRNA" evidence="6">
    <location>
        <begin position="101"/>
        <end position="145"/>
    </location>
</feature>
<feature type="compositionally biased region" description="Acidic residues" evidence="2">
    <location>
        <begin position="64"/>
        <end position="75"/>
    </location>
</feature>